<comment type="function">
    <text evidence="1">Essential for cell growth and peptidoglycan synthesis.</text>
</comment>
<comment type="subunit">
    <text evidence="1">Homodimer.</text>
</comment>
<comment type="subcellular location">
    <subcellularLocation>
        <location evidence="4">Cell membrane</location>
        <topology evidence="4">Multi-pass membrane protein</topology>
    </subcellularLocation>
</comment>
<comment type="PTM">
    <text evidence="1">Phosphorylated by PknB.</text>
</comment>
<comment type="similarity">
    <text evidence="4">In the N-terminal section; belongs to the MurJ/MviN family.</text>
</comment>
<dbReference type="EMBL" id="AE000516">
    <property type="protein sequence ID" value="AAK48394.1"/>
    <property type="molecule type" value="Genomic_DNA"/>
</dbReference>
<dbReference type="PIR" id="G70600">
    <property type="entry name" value="G70600"/>
</dbReference>
<dbReference type="SMR" id="P9WJK2"/>
<dbReference type="KEGG" id="mtc:MT4029"/>
<dbReference type="PATRIC" id="fig|83331.31.peg.4335"/>
<dbReference type="HOGENOM" id="CLU_006797_0_1_11"/>
<dbReference type="Proteomes" id="UP000001020">
    <property type="component" value="Chromosome"/>
</dbReference>
<dbReference type="GO" id="GO:0005886">
    <property type="term" value="C:plasma membrane"/>
    <property type="evidence" value="ECO:0007669"/>
    <property type="project" value="UniProtKB-SubCell"/>
</dbReference>
<dbReference type="GO" id="GO:0015648">
    <property type="term" value="F:lipid-linked peptidoglycan transporter activity"/>
    <property type="evidence" value="ECO:0007669"/>
    <property type="project" value="TreeGrafter"/>
</dbReference>
<dbReference type="GO" id="GO:0034204">
    <property type="term" value="P:lipid translocation"/>
    <property type="evidence" value="ECO:0007669"/>
    <property type="project" value="TreeGrafter"/>
</dbReference>
<dbReference type="GO" id="GO:0009252">
    <property type="term" value="P:peptidoglycan biosynthetic process"/>
    <property type="evidence" value="ECO:0007669"/>
    <property type="project" value="UniProtKB-KW"/>
</dbReference>
<dbReference type="GO" id="GO:0008360">
    <property type="term" value="P:regulation of cell shape"/>
    <property type="evidence" value="ECO:0007669"/>
    <property type="project" value="UniProtKB-KW"/>
</dbReference>
<dbReference type="CDD" id="cd13123">
    <property type="entry name" value="MATE_MurJ_like"/>
    <property type="match status" value="1"/>
</dbReference>
<dbReference type="CDD" id="cd13973">
    <property type="entry name" value="PK_MviN-like"/>
    <property type="match status" value="1"/>
</dbReference>
<dbReference type="FunFam" id="1.10.510.10:FF:001083">
    <property type="entry name" value="Probable peptidoglycan biosynthesis protein MviN"/>
    <property type="match status" value="1"/>
</dbReference>
<dbReference type="Gene3D" id="3.30.200.20">
    <property type="entry name" value="Phosphorylase Kinase, domain 1"/>
    <property type="match status" value="1"/>
</dbReference>
<dbReference type="Gene3D" id="1.10.510.10">
    <property type="entry name" value="Transferase(Phosphotransferase) domain 1"/>
    <property type="match status" value="1"/>
</dbReference>
<dbReference type="InterPro" id="IPR011009">
    <property type="entry name" value="Kinase-like_dom_sf"/>
</dbReference>
<dbReference type="InterPro" id="IPR051050">
    <property type="entry name" value="Lipid_II_flippase_MurJ/MviN"/>
</dbReference>
<dbReference type="InterPro" id="IPR004268">
    <property type="entry name" value="MurJ"/>
</dbReference>
<dbReference type="NCBIfam" id="TIGR01695">
    <property type="entry name" value="murJ_mviN"/>
    <property type="match status" value="1"/>
</dbReference>
<dbReference type="PANTHER" id="PTHR47019">
    <property type="entry name" value="LIPID II FLIPPASE MURJ"/>
    <property type="match status" value="1"/>
</dbReference>
<dbReference type="PANTHER" id="PTHR47019:SF1">
    <property type="entry name" value="LIPID II FLIPPASE MURJ"/>
    <property type="match status" value="1"/>
</dbReference>
<dbReference type="Pfam" id="PF03023">
    <property type="entry name" value="MurJ"/>
    <property type="match status" value="1"/>
</dbReference>
<dbReference type="PRINTS" id="PR01806">
    <property type="entry name" value="VIRFACTRMVIN"/>
</dbReference>
<dbReference type="SUPFAM" id="SSF56112">
    <property type="entry name" value="Protein kinase-like (PK-like)"/>
    <property type="match status" value="1"/>
</dbReference>
<reference key="1">
    <citation type="journal article" date="2002" name="J. Bacteriol.">
        <title>Whole-genome comparison of Mycobacterium tuberculosis clinical and laboratory strains.</title>
        <authorList>
            <person name="Fleischmann R.D."/>
            <person name="Alland D."/>
            <person name="Eisen J.A."/>
            <person name="Carpenter L."/>
            <person name="White O."/>
            <person name="Peterson J.D."/>
            <person name="DeBoy R.T."/>
            <person name="Dodson R.J."/>
            <person name="Gwinn M.L."/>
            <person name="Haft D.H."/>
            <person name="Hickey E.K."/>
            <person name="Kolonay J.F."/>
            <person name="Nelson W.C."/>
            <person name="Umayam L.A."/>
            <person name="Ermolaeva M.D."/>
            <person name="Salzberg S.L."/>
            <person name="Delcher A."/>
            <person name="Utterback T.R."/>
            <person name="Weidman J.F."/>
            <person name="Khouri H.M."/>
            <person name="Gill J."/>
            <person name="Mikula A."/>
            <person name="Bishai W."/>
            <person name="Jacobs W.R. Jr."/>
            <person name="Venter J.C."/>
            <person name="Fraser C.M."/>
        </authorList>
    </citation>
    <scope>NUCLEOTIDE SEQUENCE [LARGE SCALE GENOMIC DNA]</scope>
    <source>
        <strain>CDC 1551 / Oshkosh</strain>
    </source>
</reference>
<protein>
    <recommendedName>
        <fullName evidence="1">Probable peptidoglycan biosynthesis protein MviN</fullName>
    </recommendedName>
</protein>
<sequence>MRPSPGEVPTASQRQPELSDAALVSHSWAMAFATLISRITGFARIVLLAAILGAALASSFSVANQLPNLVAALVLEATFTAIFVPVLARAEQDDPDGGAAFVRRLVTLATTLLLGATTLSVLAAPLLVRLMLGTNPQVNEPLTTAFAYLLLPQVLVYGLSSVFMAILNTRNVFGPPAWAPVVNNVVAIATLAVYLAVPGELSVDPVRMGNAKLLVLGIGTTAGVFAQTAVLLVAIRREHISLRPLWGIDQRLKRFGAMAAAMVLYVLISQLGLVVGNRIASTAAASGPAIYNYTWLVLMLPFGMIGVTVLTVVMPRLSRNAAADDTPAVLADLSLATRLTMITLIPTVAFMTVGGPAIGSALFAYGNFGDVDAGYLGAAIALSAFTLIPYALVLLQLRVFYAREQPWTPITIIVVITGVKILGSLLAPHITGDPQLVAAYLGLANGLGFLAGTIVGYYILRRALRPDGGQLIGVGEARTVLVTVAASLLAGLLAHVADRLLGLSELTAHAGSVGSLLRLSVLALIMLPILAAVTLCARVPEARAALDAVRARIRSRRLKTGPQTQNVLDQSSRPGPVTYPERRRLAPPRGKSVVHEPIRRRPPEQVARAGRAKGPEVIDRPSENASFGAASGAELPRPVADELQLDAPAGRDPGPVSRPHPSDLQNGDLPADAARGPIAFDALREPDRESSAPPDDVQLVPGARIANGRYRLLIFHGGVPPLQFWQALDTALDRQVALTFVDPQGVLPDDVLQETLSRTLRLSRIDKPGVARVLDVVHTRAGGLVVAEWIRGGSLQEVADTSPSPVGAIRAMQSLAAAADAAHRAGVALSIDHPSRVRVSIDGDVVLAYPATMPDANPQDDIRGIGASLYALLVNRWPLPEAGVRSGLAPAERDTAGQPIEPADIDRDIPFQISAVAARSVQGDGGIRSASTLLNLMQQATAVADRTEVLGPIDEAPVSAAPRTSAPNSETYTRRRRNLLIGIGAGAAVLMVALLVLASVLSRIFGDVSGGLNKDELGLNAPTASTSAASSAPPGSVVKPTKVTVFSPDGGADNPGEADLAIDGNPATSWKTDIYTDPVPFPSFKNGVGLMLQLPQATVVGTVAIDVASTGTKVEIRSASTPTPATLEDTAVLTSATALRPGHNTISVEAAAPTSNLLVWISTLGTTDGKSQADISEITIYAAS</sequence>
<name>MVINL_MYCTO</name>
<evidence type="ECO:0000250" key="1">
    <source>
        <dbReference type="UniProtKB" id="P9WJK3"/>
    </source>
</evidence>
<evidence type="ECO:0000255" key="2"/>
<evidence type="ECO:0000256" key="3">
    <source>
        <dbReference type="SAM" id="MobiDB-lite"/>
    </source>
</evidence>
<evidence type="ECO:0000305" key="4"/>
<accession>P9WJK2</accession>
<accession>L0TE53</accession>
<accession>O05435</accession>
<accession>Q7D4M1</accession>
<gene>
    <name type="primary">mviN</name>
    <name type="ordered locus">MT4029</name>
</gene>
<organism>
    <name type="scientific">Mycobacterium tuberculosis (strain CDC 1551 / Oshkosh)</name>
    <dbReference type="NCBI Taxonomy" id="83331"/>
    <lineage>
        <taxon>Bacteria</taxon>
        <taxon>Bacillati</taxon>
        <taxon>Actinomycetota</taxon>
        <taxon>Actinomycetes</taxon>
        <taxon>Mycobacteriales</taxon>
        <taxon>Mycobacteriaceae</taxon>
        <taxon>Mycobacterium</taxon>
        <taxon>Mycobacterium tuberculosis complex</taxon>
    </lineage>
</organism>
<feature type="chain" id="PRO_0000427815" description="Probable peptidoglycan biosynthesis protein MviN">
    <location>
        <begin position="1"/>
        <end position="1184"/>
    </location>
</feature>
<feature type="topological domain" description="Cytoplasmic" evidence="2">
    <location>
        <begin position="1"/>
        <end position="41"/>
    </location>
</feature>
<feature type="transmembrane region" description="Helical" evidence="2">
    <location>
        <begin position="42"/>
        <end position="62"/>
    </location>
</feature>
<feature type="topological domain" description="Extracellular" evidence="2">
    <location>
        <begin position="63"/>
        <end position="67"/>
    </location>
</feature>
<feature type="transmembrane region" description="Helical" evidence="2">
    <location>
        <begin position="68"/>
        <end position="88"/>
    </location>
</feature>
<feature type="topological domain" description="Cytoplasmic" evidence="2">
    <location>
        <begin position="89"/>
        <end position="107"/>
    </location>
</feature>
<feature type="transmembrane region" description="Helical" evidence="2">
    <location>
        <begin position="108"/>
        <end position="128"/>
    </location>
</feature>
<feature type="topological domain" description="Extracellular" evidence="2">
    <location>
        <begin position="129"/>
        <end position="145"/>
    </location>
</feature>
<feature type="transmembrane region" description="Helical" evidence="2">
    <location>
        <begin position="146"/>
        <end position="166"/>
    </location>
</feature>
<feature type="topological domain" description="Cytoplasmic" evidence="2">
    <location>
        <begin position="167"/>
        <end position="176"/>
    </location>
</feature>
<feature type="transmembrane region" description="Helical" evidence="2">
    <location>
        <begin position="177"/>
        <end position="197"/>
    </location>
</feature>
<feature type="topological domain" description="Extracellular" evidence="2">
    <location>
        <begin position="198"/>
        <end position="212"/>
    </location>
</feature>
<feature type="transmembrane region" description="Helical" evidence="2">
    <location>
        <begin position="213"/>
        <end position="233"/>
    </location>
</feature>
<feature type="topological domain" description="Cytoplasmic" evidence="2">
    <location>
        <begin position="234"/>
        <end position="254"/>
    </location>
</feature>
<feature type="transmembrane region" description="Helical" evidence="2">
    <location>
        <begin position="255"/>
        <end position="275"/>
    </location>
</feature>
<feature type="topological domain" description="Extracellular" evidence="2">
    <location>
        <begin position="276"/>
        <end position="294"/>
    </location>
</feature>
<feature type="transmembrane region" description="Helical" evidence="2">
    <location>
        <begin position="295"/>
        <end position="315"/>
    </location>
</feature>
<feature type="topological domain" description="Cytoplasmic" evidence="2">
    <location>
        <begin position="316"/>
        <end position="343"/>
    </location>
</feature>
<feature type="transmembrane region" description="Helical" evidence="2">
    <location>
        <begin position="344"/>
        <end position="364"/>
    </location>
</feature>
<feature type="topological domain" description="Extracellular" evidence="2">
    <location>
        <begin position="365"/>
        <end position="374"/>
    </location>
</feature>
<feature type="transmembrane region" description="Helical" evidence="2">
    <location>
        <begin position="375"/>
        <end position="395"/>
    </location>
</feature>
<feature type="topological domain" description="Cytoplasmic" evidence="2">
    <location>
        <begin position="396"/>
        <end position="409"/>
    </location>
</feature>
<feature type="transmembrane region" description="Helical" evidence="2">
    <location>
        <begin position="410"/>
        <end position="430"/>
    </location>
</feature>
<feature type="topological domain" description="Extracellular" evidence="2">
    <location>
        <begin position="431"/>
        <end position="435"/>
    </location>
</feature>
<feature type="transmembrane region" description="Helical" evidence="2">
    <location>
        <begin position="436"/>
        <end position="456"/>
    </location>
</feature>
<feature type="topological domain" description="Cytoplasmic" evidence="2">
    <location>
        <begin position="457"/>
        <end position="476"/>
    </location>
</feature>
<feature type="transmembrane region" description="Helical" evidence="2">
    <location>
        <begin position="477"/>
        <end position="497"/>
    </location>
</feature>
<feature type="topological domain" description="Extracellular" evidence="2">
    <location>
        <begin position="498"/>
        <end position="512"/>
    </location>
</feature>
<feature type="transmembrane region" description="Helical" evidence="2">
    <location>
        <begin position="513"/>
        <end position="533"/>
    </location>
</feature>
<feature type="topological domain" description="Cytoplasmic" evidence="2">
    <location>
        <begin position="534"/>
        <end position="979"/>
    </location>
</feature>
<feature type="transmembrane region" description="Helical" evidence="2">
    <location>
        <begin position="980"/>
        <end position="1000"/>
    </location>
</feature>
<feature type="topological domain" description="Extracellular" evidence="2">
    <location>
        <begin position="1001"/>
        <end position="1184"/>
    </location>
</feature>
<feature type="region of interest" description="Disordered" evidence="3">
    <location>
        <begin position="557"/>
        <end position="673"/>
    </location>
</feature>
<feature type="compositionally biased region" description="Polar residues" evidence="3">
    <location>
        <begin position="561"/>
        <end position="573"/>
    </location>
</feature>
<feature type="compositionally biased region" description="Basic and acidic residues" evidence="3">
    <location>
        <begin position="593"/>
        <end position="603"/>
    </location>
</feature>
<feature type="compositionally biased region" description="Basic and acidic residues" evidence="3">
    <location>
        <begin position="613"/>
        <end position="622"/>
    </location>
</feature>
<feature type="modified residue" description="Phosphothreonine" evidence="1">
    <location>
        <position position="947"/>
    </location>
</feature>
<proteinExistence type="inferred from homology"/>
<keyword id="KW-1003">Cell membrane</keyword>
<keyword id="KW-0133">Cell shape</keyword>
<keyword id="KW-0472">Membrane</keyword>
<keyword id="KW-0573">Peptidoglycan synthesis</keyword>
<keyword id="KW-0597">Phosphoprotein</keyword>
<keyword id="KW-1185">Reference proteome</keyword>
<keyword id="KW-0812">Transmembrane</keyword>
<keyword id="KW-1133">Transmembrane helix</keyword>